<evidence type="ECO:0000255" key="1">
    <source>
        <dbReference type="HAMAP-Rule" id="MF_01328"/>
    </source>
</evidence>
<evidence type="ECO:0000256" key="2">
    <source>
        <dbReference type="SAM" id="MobiDB-lite"/>
    </source>
</evidence>
<evidence type="ECO:0000305" key="3"/>
<reference key="1">
    <citation type="journal article" date="2009" name="Infect. Immun.">
        <title>Comparative genomics reveal extensive transposon-mediated genomic plasticity and diversity among potential effector proteins within the genus Coxiella.</title>
        <authorList>
            <person name="Beare P.A."/>
            <person name="Unsworth N."/>
            <person name="Andoh M."/>
            <person name="Voth D.E."/>
            <person name="Omsland A."/>
            <person name="Gilk S.D."/>
            <person name="Williams K.P."/>
            <person name="Sobral B.W."/>
            <person name="Kupko J.J. III"/>
            <person name="Porcella S.F."/>
            <person name="Samuel J.E."/>
            <person name="Heinzen R.A."/>
        </authorList>
    </citation>
    <scope>NUCLEOTIDE SEQUENCE [LARGE SCALE GENOMIC DNA]</scope>
    <source>
        <strain>Dugway 5J108-111</strain>
    </source>
</reference>
<gene>
    <name evidence="1" type="primary">rplD</name>
    <name type="ordered locus">CBUD_1853</name>
</gene>
<sequence>MELPVNSFDKKEASTLTVADSAFGSEYKEGLVHQVVNAYLAGGRAGTKAQKTRREVSGSGAKPWRQKGTGRARAGSSRSPLWRSGGVAFAAKPRDFTQKVNRKMYRSAMASILSELIRREQLVVVDSLKLNEPKTRELKESLKKLNLGNVLIIIDGDDRNINLASRNMVGVSVCDALHVDPVSLVAAENIVVTVDAVKRLEERLS</sequence>
<accession>A9KD30</accession>
<comment type="function">
    <text evidence="1">One of the primary rRNA binding proteins, this protein initially binds near the 5'-end of the 23S rRNA. It is important during the early stages of 50S assembly. It makes multiple contacts with different domains of the 23S rRNA in the assembled 50S subunit and ribosome.</text>
</comment>
<comment type="function">
    <text evidence="1">Forms part of the polypeptide exit tunnel.</text>
</comment>
<comment type="subunit">
    <text evidence="1">Part of the 50S ribosomal subunit.</text>
</comment>
<comment type="similarity">
    <text evidence="1">Belongs to the universal ribosomal protein uL4 family.</text>
</comment>
<comment type="sequence caution" evidence="3">
    <conflict type="erroneous initiation">
        <sequence resource="EMBL-CDS" id="ABS76582"/>
    </conflict>
</comment>
<organism>
    <name type="scientific">Coxiella burnetii (strain Dugway 5J108-111)</name>
    <dbReference type="NCBI Taxonomy" id="434922"/>
    <lineage>
        <taxon>Bacteria</taxon>
        <taxon>Pseudomonadati</taxon>
        <taxon>Pseudomonadota</taxon>
        <taxon>Gammaproteobacteria</taxon>
        <taxon>Legionellales</taxon>
        <taxon>Coxiellaceae</taxon>
        <taxon>Coxiella</taxon>
    </lineage>
</organism>
<name>RL4_COXBN</name>
<dbReference type="EMBL" id="CP000733">
    <property type="protein sequence ID" value="ABS76582.2"/>
    <property type="status" value="ALT_INIT"/>
    <property type="molecule type" value="Genomic_DNA"/>
</dbReference>
<dbReference type="RefSeq" id="WP_011997289.1">
    <property type="nucleotide sequence ID" value="NC_009727.1"/>
</dbReference>
<dbReference type="SMR" id="A9KD30"/>
<dbReference type="KEGG" id="cbd:CBUD_1853"/>
<dbReference type="HOGENOM" id="CLU_041575_5_2_6"/>
<dbReference type="Proteomes" id="UP000008555">
    <property type="component" value="Chromosome"/>
</dbReference>
<dbReference type="GO" id="GO:1990904">
    <property type="term" value="C:ribonucleoprotein complex"/>
    <property type="evidence" value="ECO:0007669"/>
    <property type="project" value="UniProtKB-KW"/>
</dbReference>
<dbReference type="GO" id="GO:0005840">
    <property type="term" value="C:ribosome"/>
    <property type="evidence" value="ECO:0007669"/>
    <property type="project" value="UniProtKB-KW"/>
</dbReference>
<dbReference type="GO" id="GO:0019843">
    <property type="term" value="F:rRNA binding"/>
    <property type="evidence" value="ECO:0007669"/>
    <property type="project" value="UniProtKB-UniRule"/>
</dbReference>
<dbReference type="GO" id="GO:0003735">
    <property type="term" value="F:structural constituent of ribosome"/>
    <property type="evidence" value="ECO:0007669"/>
    <property type="project" value="InterPro"/>
</dbReference>
<dbReference type="GO" id="GO:0006412">
    <property type="term" value="P:translation"/>
    <property type="evidence" value="ECO:0007669"/>
    <property type="project" value="UniProtKB-UniRule"/>
</dbReference>
<dbReference type="FunFam" id="3.40.1370.10:FF:000001">
    <property type="entry name" value="50S ribosomal protein L4"/>
    <property type="match status" value="1"/>
</dbReference>
<dbReference type="Gene3D" id="3.40.1370.10">
    <property type="match status" value="1"/>
</dbReference>
<dbReference type="HAMAP" id="MF_01328_B">
    <property type="entry name" value="Ribosomal_uL4_B"/>
    <property type="match status" value="1"/>
</dbReference>
<dbReference type="InterPro" id="IPR002136">
    <property type="entry name" value="Ribosomal_uL4"/>
</dbReference>
<dbReference type="InterPro" id="IPR013005">
    <property type="entry name" value="Ribosomal_uL4-like"/>
</dbReference>
<dbReference type="InterPro" id="IPR023574">
    <property type="entry name" value="Ribosomal_uL4_dom_sf"/>
</dbReference>
<dbReference type="NCBIfam" id="TIGR03953">
    <property type="entry name" value="rplD_bact"/>
    <property type="match status" value="1"/>
</dbReference>
<dbReference type="PANTHER" id="PTHR10746">
    <property type="entry name" value="50S RIBOSOMAL PROTEIN L4"/>
    <property type="match status" value="1"/>
</dbReference>
<dbReference type="PANTHER" id="PTHR10746:SF6">
    <property type="entry name" value="LARGE RIBOSOMAL SUBUNIT PROTEIN UL4M"/>
    <property type="match status" value="1"/>
</dbReference>
<dbReference type="Pfam" id="PF00573">
    <property type="entry name" value="Ribosomal_L4"/>
    <property type="match status" value="1"/>
</dbReference>
<dbReference type="SUPFAM" id="SSF52166">
    <property type="entry name" value="Ribosomal protein L4"/>
    <property type="match status" value="1"/>
</dbReference>
<feature type="chain" id="PRO_1000086515" description="Large ribosomal subunit protein uL4">
    <location>
        <begin position="1"/>
        <end position="205"/>
    </location>
</feature>
<feature type="region of interest" description="Disordered" evidence="2">
    <location>
        <begin position="44"/>
        <end position="79"/>
    </location>
</feature>
<keyword id="KW-0687">Ribonucleoprotein</keyword>
<keyword id="KW-0689">Ribosomal protein</keyword>
<keyword id="KW-0694">RNA-binding</keyword>
<keyword id="KW-0699">rRNA-binding</keyword>
<proteinExistence type="inferred from homology"/>
<protein>
    <recommendedName>
        <fullName evidence="1">Large ribosomal subunit protein uL4</fullName>
    </recommendedName>
    <alternativeName>
        <fullName evidence="3">50S ribosomal protein L4</fullName>
    </alternativeName>
</protein>